<evidence type="ECO:0000250" key="1"/>
<evidence type="ECO:0000305" key="2"/>
<accession>P0A872</accession>
<accession>P30148</accession>
<sequence length="317" mass="35219">MTDKLTSLRQYTTVVADTGDIAAMKLYQPQDATTNPSLILNAAQIPEYRKLIDDAVAWAKQQSNDRAQQIVDATDKLAVNIGLEILKLVPGRISTEVDARLSYDTEASIAKAKRLIKLYNDAGISNDRILIKLASTWQGIRAAEQLEKEGINCNLTLLFSFAQARACAEAGVFLISPFVGRILDWYKANTDKKEYAPAEDPGVVSVSEIYQYYKEHGYETVVMGASFRNIGEILELAGCDRLTIAPALLKELAESEGAIERKLSYTGEVKARPARITESEFLWQHNQDPMAVDKLAEGIRKFAIDQEKLEKMIGDLL</sequence>
<reference key="1">
    <citation type="journal article" date="2002" name="Nucleic Acids Res.">
        <title>Genome sequence of Shigella flexneri 2a: insights into pathogenicity through comparison with genomes of Escherichia coli K12 and O157.</title>
        <authorList>
            <person name="Jin Q."/>
            <person name="Yuan Z."/>
            <person name="Xu J."/>
            <person name="Wang Y."/>
            <person name="Shen Y."/>
            <person name="Lu W."/>
            <person name="Wang J."/>
            <person name="Liu H."/>
            <person name="Yang J."/>
            <person name="Yang F."/>
            <person name="Zhang X."/>
            <person name="Zhang J."/>
            <person name="Yang G."/>
            <person name="Wu H."/>
            <person name="Qu D."/>
            <person name="Dong J."/>
            <person name="Sun L."/>
            <person name="Xue Y."/>
            <person name="Zhao A."/>
            <person name="Gao Y."/>
            <person name="Zhu J."/>
            <person name="Kan B."/>
            <person name="Ding K."/>
            <person name="Chen S."/>
            <person name="Cheng H."/>
            <person name="Yao Z."/>
            <person name="He B."/>
            <person name="Chen R."/>
            <person name="Ma D."/>
            <person name="Qiang B."/>
            <person name="Wen Y."/>
            <person name="Hou Y."/>
            <person name="Yu J."/>
        </authorList>
    </citation>
    <scope>NUCLEOTIDE SEQUENCE [LARGE SCALE GENOMIC DNA]</scope>
    <source>
        <strain>301 / Serotype 2a</strain>
    </source>
</reference>
<reference key="2">
    <citation type="journal article" date="2003" name="Infect. Immun.">
        <title>Complete genome sequence and comparative genomics of Shigella flexneri serotype 2a strain 2457T.</title>
        <authorList>
            <person name="Wei J."/>
            <person name="Goldberg M.B."/>
            <person name="Burland V."/>
            <person name="Venkatesan M.M."/>
            <person name="Deng W."/>
            <person name="Fournier G."/>
            <person name="Mayhew G.F."/>
            <person name="Plunkett G. III"/>
            <person name="Rose D.J."/>
            <person name="Darling A."/>
            <person name="Mau B."/>
            <person name="Perna N.T."/>
            <person name="Payne S.M."/>
            <person name="Runyen-Janecky L.J."/>
            <person name="Zhou S."/>
            <person name="Schwartz D.C."/>
            <person name="Blattner F.R."/>
        </authorList>
    </citation>
    <scope>NUCLEOTIDE SEQUENCE [LARGE SCALE GENOMIC DNA]</scope>
    <source>
        <strain>ATCC 700930 / 2457T / Serotype 2a</strain>
    </source>
</reference>
<comment type="function">
    <text evidence="1">Transaldolase is important for the balance of metabolites in the pentose-phosphate pathway.</text>
</comment>
<comment type="catalytic activity">
    <reaction>
        <text>D-sedoheptulose 7-phosphate + D-glyceraldehyde 3-phosphate = D-erythrose 4-phosphate + beta-D-fructose 6-phosphate</text>
        <dbReference type="Rhea" id="RHEA:17053"/>
        <dbReference type="ChEBI" id="CHEBI:16897"/>
        <dbReference type="ChEBI" id="CHEBI:57483"/>
        <dbReference type="ChEBI" id="CHEBI:57634"/>
        <dbReference type="ChEBI" id="CHEBI:59776"/>
        <dbReference type="EC" id="2.2.1.2"/>
    </reaction>
</comment>
<comment type="pathway">
    <text>Carbohydrate degradation; pentose phosphate pathway; D-glyceraldehyde 3-phosphate and beta-D-fructose 6-phosphate from D-ribose 5-phosphate and D-xylulose 5-phosphate (non-oxidative stage): step 2/3.</text>
</comment>
<comment type="subunit">
    <text evidence="1">Homodimer.</text>
</comment>
<comment type="subcellular location">
    <subcellularLocation>
        <location evidence="1">Cytoplasm</location>
    </subcellularLocation>
</comment>
<comment type="similarity">
    <text evidence="2">Belongs to the transaldolase family. Type 1 subfamily.</text>
</comment>
<name>TALB_SHIFL</name>
<proteinExistence type="inferred from homology"/>
<organism>
    <name type="scientific">Shigella flexneri</name>
    <dbReference type="NCBI Taxonomy" id="623"/>
    <lineage>
        <taxon>Bacteria</taxon>
        <taxon>Pseudomonadati</taxon>
        <taxon>Pseudomonadota</taxon>
        <taxon>Gammaproteobacteria</taxon>
        <taxon>Enterobacterales</taxon>
        <taxon>Enterobacteriaceae</taxon>
        <taxon>Shigella</taxon>
    </lineage>
</organism>
<protein>
    <recommendedName>
        <fullName>Transaldolase B</fullName>
        <ecNumber>2.2.1.2</ecNumber>
    </recommendedName>
</protein>
<feature type="initiator methionine" description="Removed" evidence="1">
    <location>
        <position position="1"/>
    </location>
</feature>
<feature type="chain" id="PRO_0000173596" description="Transaldolase B">
    <location>
        <begin position="2"/>
        <end position="317"/>
    </location>
</feature>
<feature type="active site" description="Schiff-base intermediate with substrate" evidence="1">
    <location>
        <position position="132"/>
    </location>
</feature>
<keyword id="KW-0963">Cytoplasm</keyword>
<keyword id="KW-0570">Pentose shunt</keyword>
<keyword id="KW-1185">Reference proteome</keyword>
<keyword id="KW-0704">Schiff base</keyword>
<keyword id="KW-0808">Transferase</keyword>
<gene>
    <name type="primary">talB</name>
    <name type="ordered locus">SF0009</name>
    <name type="ordered locus">S0008</name>
</gene>
<dbReference type="EC" id="2.2.1.2"/>
<dbReference type="EMBL" id="AE005674">
    <property type="protein sequence ID" value="AAN41675.2"/>
    <property type="molecule type" value="Genomic_DNA"/>
</dbReference>
<dbReference type="EMBL" id="AE014073">
    <property type="protein sequence ID" value="AAP15554.1"/>
    <property type="molecule type" value="Genomic_DNA"/>
</dbReference>
<dbReference type="RefSeq" id="NP_705968.2">
    <property type="nucleotide sequence ID" value="NC_004337.2"/>
</dbReference>
<dbReference type="SMR" id="P0A872"/>
<dbReference type="STRING" id="198214.SF0009"/>
<dbReference type="DrugBank" id="DB01815">
    <property type="generic name" value="Nz-(Dicarboxymethyl)Lysine"/>
</dbReference>
<dbReference type="PaxDb" id="198214-SF0009"/>
<dbReference type="GeneID" id="1027387"/>
<dbReference type="KEGG" id="sfl:SF0009"/>
<dbReference type="KEGG" id="sfx:S0008"/>
<dbReference type="PATRIC" id="fig|198214.7.peg.8"/>
<dbReference type="HOGENOM" id="CLU_047470_0_1_6"/>
<dbReference type="UniPathway" id="UPA00115">
    <property type="reaction ID" value="UER00414"/>
</dbReference>
<dbReference type="Proteomes" id="UP000001006">
    <property type="component" value="Chromosome"/>
</dbReference>
<dbReference type="Proteomes" id="UP000002673">
    <property type="component" value="Chromosome"/>
</dbReference>
<dbReference type="GO" id="GO:0005829">
    <property type="term" value="C:cytosol"/>
    <property type="evidence" value="ECO:0007669"/>
    <property type="project" value="TreeGrafter"/>
</dbReference>
<dbReference type="GO" id="GO:0004801">
    <property type="term" value="F:transaldolase activity"/>
    <property type="evidence" value="ECO:0000250"/>
    <property type="project" value="UniProtKB"/>
</dbReference>
<dbReference type="GO" id="GO:0005975">
    <property type="term" value="P:carbohydrate metabolic process"/>
    <property type="evidence" value="ECO:0007669"/>
    <property type="project" value="InterPro"/>
</dbReference>
<dbReference type="GO" id="GO:0006098">
    <property type="term" value="P:pentose-phosphate shunt"/>
    <property type="evidence" value="ECO:0007669"/>
    <property type="project" value="UniProtKB-UniRule"/>
</dbReference>
<dbReference type="CDD" id="cd00957">
    <property type="entry name" value="Transaldolase_TalAB"/>
    <property type="match status" value="1"/>
</dbReference>
<dbReference type="FunFam" id="3.20.20.70:FF:000002">
    <property type="entry name" value="Transaldolase"/>
    <property type="match status" value="1"/>
</dbReference>
<dbReference type="Gene3D" id="3.20.20.70">
    <property type="entry name" value="Aldolase class I"/>
    <property type="match status" value="1"/>
</dbReference>
<dbReference type="HAMAP" id="MF_00492">
    <property type="entry name" value="Transaldolase_1"/>
    <property type="match status" value="1"/>
</dbReference>
<dbReference type="InterPro" id="IPR013785">
    <property type="entry name" value="Aldolase_TIM"/>
</dbReference>
<dbReference type="InterPro" id="IPR001585">
    <property type="entry name" value="TAL/FSA"/>
</dbReference>
<dbReference type="InterPro" id="IPR004730">
    <property type="entry name" value="Transaldolase_1"/>
</dbReference>
<dbReference type="InterPro" id="IPR018225">
    <property type="entry name" value="Transaldolase_AS"/>
</dbReference>
<dbReference type="NCBIfam" id="NF009001">
    <property type="entry name" value="PRK12346.1"/>
    <property type="match status" value="1"/>
</dbReference>
<dbReference type="NCBIfam" id="TIGR00874">
    <property type="entry name" value="talAB"/>
    <property type="match status" value="1"/>
</dbReference>
<dbReference type="PANTHER" id="PTHR10683">
    <property type="entry name" value="TRANSALDOLASE"/>
    <property type="match status" value="1"/>
</dbReference>
<dbReference type="PANTHER" id="PTHR10683:SF18">
    <property type="entry name" value="TRANSALDOLASE"/>
    <property type="match status" value="1"/>
</dbReference>
<dbReference type="Pfam" id="PF00923">
    <property type="entry name" value="TAL_FSA"/>
    <property type="match status" value="1"/>
</dbReference>
<dbReference type="SUPFAM" id="SSF51569">
    <property type="entry name" value="Aldolase"/>
    <property type="match status" value="1"/>
</dbReference>
<dbReference type="PROSITE" id="PS01054">
    <property type="entry name" value="TRANSALDOLASE_1"/>
    <property type="match status" value="1"/>
</dbReference>
<dbReference type="PROSITE" id="PS00958">
    <property type="entry name" value="TRANSALDOLASE_2"/>
    <property type="match status" value="1"/>
</dbReference>